<protein>
    <recommendedName>
        <fullName evidence="1">Adenosine deaminase</fullName>
        <ecNumber evidence="1">3.5.4.4</ecNumber>
    </recommendedName>
    <alternativeName>
        <fullName evidence="1">Adenosine aminohydrolase</fullName>
    </alternativeName>
</protein>
<organism>
    <name type="scientific">Shigella dysenteriae serotype 1 (strain Sd197)</name>
    <dbReference type="NCBI Taxonomy" id="300267"/>
    <lineage>
        <taxon>Bacteria</taxon>
        <taxon>Pseudomonadati</taxon>
        <taxon>Pseudomonadota</taxon>
        <taxon>Gammaproteobacteria</taxon>
        <taxon>Enterobacterales</taxon>
        <taxon>Enterobacteriaceae</taxon>
        <taxon>Shigella</taxon>
    </lineage>
</organism>
<proteinExistence type="inferred from homology"/>
<keyword id="KW-0378">Hydrolase</keyword>
<keyword id="KW-0479">Metal-binding</keyword>
<keyword id="KW-0546">Nucleotide metabolism</keyword>
<keyword id="KW-1185">Reference proteome</keyword>
<keyword id="KW-0862">Zinc</keyword>
<sequence>MIDTTLPLTDIHRHLDGNIRPQTILELGRQYNISLPAHSLETLIPHVQVIANEPDLVSFLTKLDWGVKVLASLDACRRVAFENIEDAARHGLHYVELRFSPGYMAMAHQLPVAGVVEAVIDGVREGCRTFGVQAKLIGIMSRTFGEAACQQELEAFLAHRDQITALDLAGDELGFPGSLFLSHFNRARDAGWHITVHAGEAAGPESIWQAIRELGAERIGHGVKAIEDRALMDFLAEQQIGIESCLTSNIQTSTVAELAAHPLKTFLEHGIRASINTDDPGVQGVDIIHEYTVAAPAAGLSREQIRQAQINGLEMAFLSAEEKRALREKVAAK</sequence>
<dbReference type="EC" id="3.5.4.4" evidence="1"/>
<dbReference type="EMBL" id="CP000034">
    <property type="protein sequence ID" value="ABB61955.1"/>
    <property type="molecule type" value="Genomic_DNA"/>
</dbReference>
<dbReference type="RefSeq" id="WP_000567473.1">
    <property type="nucleotide sequence ID" value="NC_007606.1"/>
</dbReference>
<dbReference type="RefSeq" id="YP_403446.1">
    <property type="nucleotide sequence ID" value="NC_007606.1"/>
</dbReference>
<dbReference type="SMR" id="Q32FF0"/>
<dbReference type="STRING" id="300267.SDY_1846"/>
<dbReference type="EnsemblBacteria" id="ABB61955">
    <property type="protein sequence ID" value="ABB61955"/>
    <property type="gene ID" value="SDY_1846"/>
</dbReference>
<dbReference type="KEGG" id="sdy:SDY_1846"/>
<dbReference type="PATRIC" id="fig|300267.13.peg.2225"/>
<dbReference type="HOGENOM" id="CLU_039228_0_2_6"/>
<dbReference type="Proteomes" id="UP000002716">
    <property type="component" value="Chromosome"/>
</dbReference>
<dbReference type="GO" id="GO:0005829">
    <property type="term" value="C:cytosol"/>
    <property type="evidence" value="ECO:0007669"/>
    <property type="project" value="TreeGrafter"/>
</dbReference>
<dbReference type="GO" id="GO:0046936">
    <property type="term" value="F:2'-deoxyadenosine deaminase activity"/>
    <property type="evidence" value="ECO:0007669"/>
    <property type="project" value="RHEA"/>
</dbReference>
<dbReference type="GO" id="GO:0004000">
    <property type="term" value="F:adenosine deaminase activity"/>
    <property type="evidence" value="ECO:0007669"/>
    <property type="project" value="UniProtKB-UniRule"/>
</dbReference>
<dbReference type="GO" id="GO:0008270">
    <property type="term" value="F:zinc ion binding"/>
    <property type="evidence" value="ECO:0007669"/>
    <property type="project" value="UniProtKB-UniRule"/>
</dbReference>
<dbReference type="GO" id="GO:0006154">
    <property type="term" value="P:adenosine catabolic process"/>
    <property type="evidence" value="ECO:0007669"/>
    <property type="project" value="TreeGrafter"/>
</dbReference>
<dbReference type="GO" id="GO:0043103">
    <property type="term" value="P:hypoxanthine salvage"/>
    <property type="evidence" value="ECO:0007669"/>
    <property type="project" value="TreeGrafter"/>
</dbReference>
<dbReference type="GO" id="GO:0046103">
    <property type="term" value="P:inosine biosynthetic process"/>
    <property type="evidence" value="ECO:0007669"/>
    <property type="project" value="TreeGrafter"/>
</dbReference>
<dbReference type="GO" id="GO:0009117">
    <property type="term" value="P:nucleotide metabolic process"/>
    <property type="evidence" value="ECO:0007669"/>
    <property type="project" value="UniProtKB-KW"/>
</dbReference>
<dbReference type="GO" id="GO:0009168">
    <property type="term" value="P:purine ribonucleoside monophosphate biosynthetic process"/>
    <property type="evidence" value="ECO:0007669"/>
    <property type="project" value="UniProtKB-UniRule"/>
</dbReference>
<dbReference type="CDD" id="cd01320">
    <property type="entry name" value="ADA"/>
    <property type="match status" value="1"/>
</dbReference>
<dbReference type="FunFam" id="3.20.20.140:FF:000009">
    <property type="entry name" value="Adenosine deaminase"/>
    <property type="match status" value="1"/>
</dbReference>
<dbReference type="Gene3D" id="3.20.20.140">
    <property type="entry name" value="Metal-dependent hydrolases"/>
    <property type="match status" value="1"/>
</dbReference>
<dbReference type="HAMAP" id="MF_00540">
    <property type="entry name" value="A_deaminase"/>
    <property type="match status" value="1"/>
</dbReference>
<dbReference type="InterPro" id="IPR006650">
    <property type="entry name" value="A/AMP_deam_AS"/>
</dbReference>
<dbReference type="InterPro" id="IPR028893">
    <property type="entry name" value="A_deaminase"/>
</dbReference>
<dbReference type="InterPro" id="IPR001365">
    <property type="entry name" value="A_deaminase_dom"/>
</dbReference>
<dbReference type="InterPro" id="IPR006330">
    <property type="entry name" value="Ado/ade_deaminase"/>
</dbReference>
<dbReference type="InterPro" id="IPR032466">
    <property type="entry name" value="Metal_Hydrolase"/>
</dbReference>
<dbReference type="NCBIfam" id="TIGR01430">
    <property type="entry name" value="aden_deam"/>
    <property type="match status" value="1"/>
</dbReference>
<dbReference type="NCBIfam" id="NF006846">
    <property type="entry name" value="PRK09358.1-1"/>
    <property type="match status" value="1"/>
</dbReference>
<dbReference type="PANTHER" id="PTHR11409">
    <property type="entry name" value="ADENOSINE DEAMINASE"/>
    <property type="match status" value="1"/>
</dbReference>
<dbReference type="PANTHER" id="PTHR11409:SF43">
    <property type="entry name" value="ADENOSINE DEAMINASE"/>
    <property type="match status" value="1"/>
</dbReference>
<dbReference type="Pfam" id="PF00962">
    <property type="entry name" value="A_deaminase"/>
    <property type="match status" value="1"/>
</dbReference>
<dbReference type="SUPFAM" id="SSF51556">
    <property type="entry name" value="Metallo-dependent hydrolases"/>
    <property type="match status" value="1"/>
</dbReference>
<dbReference type="PROSITE" id="PS00485">
    <property type="entry name" value="A_DEAMINASE"/>
    <property type="match status" value="1"/>
</dbReference>
<name>ADD_SHIDS</name>
<feature type="chain" id="PRO_1000017705" description="Adenosine deaminase">
    <location>
        <begin position="1"/>
        <end position="333"/>
    </location>
</feature>
<feature type="active site" description="Proton donor" evidence="1">
    <location>
        <position position="200"/>
    </location>
</feature>
<feature type="binding site" evidence="1">
    <location>
        <position position="12"/>
    </location>
    <ligand>
        <name>Zn(2+)</name>
        <dbReference type="ChEBI" id="CHEBI:29105"/>
        <note>catalytic</note>
    </ligand>
</feature>
<feature type="binding site" evidence="1">
    <location>
        <position position="14"/>
    </location>
    <ligand>
        <name>substrate</name>
    </ligand>
</feature>
<feature type="binding site" evidence="1">
    <location>
        <position position="14"/>
    </location>
    <ligand>
        <name>Zn(2+)</name>
        <dbReference type="ChEBI" id="CHEBI:29105"/>
        <note>catalytic</note>
    </ligand>
</feature>
<feature type="binding site" evidence="1">
    <location>
        <position position="16"/>
    </location>
    <ligand>
        <name>substrate</name>
    </ligand>
</feature>
<feature type="binding site" evidence="1">
    <location>
        <position position="170"/>
    </location>
    <ligand>
        <name>substrate</name>
    </ligand>
</feature>
<feature type="binding site" evidence="1">
    <location>
        <position position="197"/>
    </location>
    <ligand>
        <name>Zn(2+)</name>
        <dbReference type="ChEBI" id="CHEBI:29105"/>
        <note>catalytic</note>
    </ligand>
</feature>
<feature type="binding site" evidence="1">
    <location>
        <position position="278"/>
    </location>
    <ligand>
        <name>Zn(2+)</name>
        <dbReference type="ChEBI" id="CHEBI:29105"/>
        <note>catalytic</note>
    </ligand>
</feature>
<feature type="binding site" evidence="1">
    <location>
        <position position="279"/>
    </location>
    <ligand>
        <name>substrate</name>
    </ligand>
</feature>
<feature type="site" description="Important for catalytic activity" evidence="1">
    <location>
        <position position="221"/>
    </location>
</feature>
<comment type="function">
    <text evidence="1">Catalyzes the hydrolytic deamination of adenosine and 2-deoxyadenosine.</text>
</comment>
<comment type="catalytic activity">
    <reaction evidence="1">
        <text>adenosine + H2O + H(+) = inosine + NH4(+)</text>
        <dbReference type="Rhea" id="RHEA:24408"/>
        <dbReference type="ChEBI" id="CHEBI:15377"/>
        <dbReference type="ChEBI" id="CHEBI:15378"/>
        <dbReference type="ChEBI" id="CHEBI:16335"/>
        <dbReference type="ChEBI" id="CHEBI:17596"/>
        <dbReference type="ChEBI" id="CHEBI:28938"/>
        <dbReference type="EC" id="3.5.4.4"/>
    </reaction>
    <physiologicalReaction direction="left-to-right" evidence="1">
        <dbReference type="Rhea" id="RHEA:24409"/>
    </physiologicalReaction>
</comment>
<comment type="catalytic activity">
    <reaction evidence="1">
        <text>2'-deoxyadenosine + H2O + H(+) = 2'-deoxyinosine + NH4(+)</text>
        <dbReference type="Rhea" id="RHEA:28190"/>
        <dbReference type="ChEBI" id="CHEBI:15377"/>
        <dbReference type="ChEBI" id="CHEBI:15378"/>
        <dbReference type="ChEBI" id="CHEBI:17256"/>
        <dbReference type="ChEBI" id="CHEBI:28938"/>
        <dbReference type="ChEBI" id="CHEBI:28997"/>
        <dbReference type="EC" id="3.5.4.4"/>
    </reaction>
    <physiologicalReaction direction="left-to-right" evidence="1">
        <dbReference type="Rhea" id="RHEA:28191"/>
    </physiologicalReaction>
</comment>
<comment type="cofactor">
    <cofactor evidence="1">
        <name>Zn(2+)</name>
        <dbReference type="ChEBI" id="CHEBI:29105"/>
    </cofactor>
    <text evidence="1">Binds 1 zinc ion per subunit.</text>
</comment>
<comment type="similarity">
    <text evidence="1">Belongs to the metallo-dependent hydrolases superfamily. Adenosine and AMP deaminases family. Adenosine deaminase subfamily.</text>
</comment>
<gene>
    <name evidence="1" type="primary">add</name>
    <name type="ordered locus">SDY_1846</name>
</gene>
<accession>Q32FF0</accession>
<reference key="1">
    <citation type="journal article" date="2005" name="Nucleic Acids Res.">
        <title>Genome dynamics and diversity of Shigella species, the etiologic agents of bacillary dysentery.</title>
        <authorList>
            <person name="Yang F."/>
            <person name="Yang J."/>
            <person name="Zhang X."/>
            <person name="Chen L."/>
            <person name="Jiang Y."/>
            <person name="Yan Y."/>
            <person name="Tang X."/>
            <person name="Wang J."/>
            <person name="Xiong Z."/>
            <person name="Dong J."/>
            <person name="Xue Y."/>
            <person name="Zhu Y."/>
            <person name="Xu X."/>
            <person name="Sun L."/>
            <person name="Chen S."/>
            <person name="Nie H."/>
            <person name="Peng J."/>
            <person name="Xu J."/>
            <person name="Wang Y."/>
            <person name="Yuan Z."/>
            <person name="Wen Y."/>
            <person name="Yao Z."/>
            <person name="Shen Y."/>
            <person name="Qiang B."/>
            <person name="Hou Y."/>
            <person name="Yu J."/>
            <person name="Jin Q."/>
        </authorList>
    </citation>
    <scope>NUCLEOTIDE SEQUENCE [LARGE SCALE GENOMIC DNA]</scope>
    <source>
        <strain>Sd197</strain>
    </source>
</reference>
<evidence type="ECO:0000255" key="1">
    <source>
        <dbReference type="HAMAP-Rule" id="MF_00540"/>
    </source>
</evidence>